<comment type="function">
    <text evidence="1">Has antiprotozoal activity against T.cruzi.</text>
</comment>
<comment type="subcellular location">
    <subcellularLocation>
        <location evidence="1">Secreted</location>
    </subcellularLocation>
</comment>
<comment type="tissue specificity">
    <text evidence="1">Expressed by the skin glands.</text>
</comment>
<comment type="mass spectrometry" mass="1988.15" method="MALDI" evidence="1"/>
<comment type="similarity">
    <text evidence="4">Belongs to the frog skin active peptide (FSAP) family. Phylloseptin subfamily.</text>
</comment>
<comment type="online information" name="The antimicrobial peptide database">
    <link uri="https://wangapd3.com/database/query_output.php?ID=00760"/>
</comment>
<organism>
    <name type="scientific">Pithecopus oreades</name>
    <name type="common">Orange-legged leaf frog</name>
    <name type="synonym">Phyllomedusa oreades</name>
    <dbReference type="NCBI Taxonomy" id="239355"/>
    <lineage>
        <taxon>Eukaryota</taxon>
        <taxon>Metazoa</taxon>
        <taxon>Chordata</taxon>
        <taxon>Craniata</taxon>
        <taxon>Vertebrata</taxon>
        <taxon>Euteleostomi</taxon>
        <taxon>Amphibia</taxon>
        <taxon>Batrachia</taxon>
        <taxon>Anura</taxon>
        <taxon>Neobatrachia</taxon>
        <taxon>Hyloidea</taxon>
        <taxon>Hylidae</taxon>
        <taxon>Phyllomedusinae</taxon>
        <taxon>Pithecopus</taxon>
    </lineage>
</organism>
<gene>
    <name type="primary">psn5</name>
    <name type="synonym">psn-5</name>
</gene>
<feature type="peptide" id="PRO_0000043826" description="Phylloseptin-O2">
    <location>
        <begin position="1"/>
        <end position="19"/>
    </location>
</feature>
<feature type="modified residue" description="Serine amide" evidence="1">
    <location>
        <position position="19"/>
    </location>
</feature>
<keyword id="KW-0027">Amidation</keyword>
<keyword id="KW-0878">Amphibian defense peptide</keyword>
<keyword id="KW-0929">Antimicrobial</keyword>
<keyword id="KW-0903">Direct protein sequencing</keyword>
<keyword id="KW-0964">Secreted</keyword>
<protein>
    <recommendedName>
        <fullName evidence="3">Phylloseptin-O2</fullName>
        <shortName evidence="3">PLS-O2</shortName>
    </recommendedName>
    <alternativeName>
        <fullName evidence="2">Phylloseptin-5</fullName>
        <shortName evidence="2">PS-5</shortName>
    </alternativeName>
</protein>
<proteinExistence type="evidence at protein level"/>
<dbReference type="GO" id="GO:0005576">
    <property type="term" value="C:extracellular region"/>
    <property type="evidence" value="ECO:0007669"/>
    <property type="project" value="UniProtKB-SubCell"/>
</dbReference>
<dbReference type="GO" id="GO:0006952">
    <property type="term" value="P:defense response"/>
    <property type="evidence" value="ECO:0007669"/>
    <property type="project" value="UniProtKB-KW"/>
</dbReference>
<evidence type="ECO:0000269" key="1">
    <source>
    </source>
</evidence>
<evidence type="ECO:0000303" key="2">
    <source>
    </source>
</evidence>
<evidence type="ECO:0000303" key="3">
    <source>
    </source>
</evidence>
<evidence type="ECO:0000305" key="4"/>
<accession>P84570</accession>
<name>PLS2_PITOR</name>
<reference evidence="4" key="1">
    <citation type="journal article" date="2005" name="Peptides">
        <title>Phylloseptins: a novel class of anti-bacterial and anti-protozoan peptides from the Phyllomedusa genus.</title>
        <authorList>
            <person name="Leite J.R.S.A."/>
            <person name="Silva L.P."/>
            <person name="Rodrigues M.I.S."/>
            <person name="Prates M.V."/>
            <person name="Brand G.D."/>
            <person name="Lacava B.M."/>
            <person name="Azevedo R.B."/>
            <person name="Bocca A.L."/>
            <person name="Albuquerque S."/>
            <person name="Bloch C. Jr."/>
        </authorList>
    </citation>
    <scope>PROTEIN SEQUENCE</scope>
    <scope>FUNCTION</scope>
    <scope>SUBCELLULAR LOCATION</scope>
    <scope>TISSUE SPECIFICITY</scope>
    <scope>MASS SPECTROMETRY</scope>
    <scope>AMIDATION AT SER-19</scope>
    <source>
        <tissue evidence="1">Skin secretion</tissue>
    </source>
</reference>
<reference key="2">
    <citation type="journal article" date="2008" name="Peptides">
        <title>A consistent nomenclature of antimicrobial peptides isolated from frogs of the subfamily Phyllomedusinae.</title>
        <authorList>
            <person name="Amiche M."/>
            <person name="Ladram A."/>
            <person name="Nicolas P."/>
        </authorList>
    </citation>
    <scope>NOMENCLATURE</scope>
</reference>
<sequence length="19" mass="1989">FLSLIPHAINAVSAIAKHS</sequence>